<protein>
    <recommendedName>
        <fullName>Protein hunchback</fullName>
    </recommendedName>
</protein>
<feature type="chain" id="PRO_0000046949" description="Protein hunchback">
    <location>
        <begin position="1" status="less than"/>
        <end position="196" status="greater than"/>
    </location>
</feature>
<feature type="region of interest" description="Disordered" evidence="2">
    <location>
        <begin position="16"/>
        <end position="56"/>
    </location>
</feature>
<feature type="region of interest" description="Disordered" evidence="2">
    <location>
        <begin position="63"/>
        <end position="82"/>
    </location>
</feature>
<feature type="region of interest" description="Disordered" evidence="2">
    <location>
        <begin position="156"/>
        <end position="196"/>
    </location>
</feature>
<feature type="compositionally biased region" description="Basic residues" evidence="2">
    <location>
        <begin position="17"/>
        <end position="29"/>
    </location>
</feature>
<feature type="compositionally biased region" description="Low complexity" evidence="2">
    <location>
        <begin position="33"/>
        <end position="43"/>
    </location>
</feature>
<feature type="compositionally biased region" description="Low complexity" evidence="2">
    <location>
        <begin position="65"/>
        <end position="80"/>
    </location>
</feature>
<feature type="compositionally biased region" description="Basic and acidic residues" evidence="2">
    <location>
        <begin position="177"/>
        <end position="196"/>
    </location>
</feature>
<feature type="non-consecutive residues" evidence="3">
    <location>
        <begin position="101"/>
        <end position="102"/>
    </location>
</feature>
<feature type="non-terminal residue">
    <location>
        <position position="1"/>
    </location>
</feature>
<feature type="non-terminal residue">
    <location>
        <position position="196"/>
    </location>
</feature>
<comment type="function">
    <text evidence="1">Gap class segmentation protein that controls development of head structures.</text>
</comment>
<comment type="subcellular location">
    <subcellularLocation>
        <location evidence="1">Nucleus</location>
    </subcellularLocation>
</comment>
<comment type="similarity">
    <text evidence="3">Belongs to the hunchback C2H2-type zinc-finger protein family.</text>
</comment>
<organism>
    <name type="scientific">Drosophila adunca</name>
    <name type="common">Fruit fly</name>
    <dbReference type="NCBI Taxonomy" id="46893"/>
    <lineage>
        <taxon>Eukaryota</taxon>
        <taxon>Metazoa</taxon>
        <taxon>Ecdysozoa</taxon>
        <taxon>Arthropoda</taxon>
        <taxon>Hexapoda</taxon>
        <taxon>Insecta</taxon>
        <taxon>Pterygota</taxon>
        <taxon>Neoptera</taxon>
        <taxon>Endopterygota</taxon>
        <taxon>Diptera</taxon>
        <taxon>Brachycera</taxon>
        <taxon>Muscomorpha</taxon>
        <taxon>Ephydroidea</taxon>
        <taxon>Drosophilidae</taxon>
        <taxon>Drosophila</taxon>
        <taxon>Hawaiian Drosophila</taxon>
    </lineage>
</organism>
<sequence>WYSSMFAANIKQEPISHHHHHHHAHHSHHAHDSNSNASNSPHQSPLPSPNPPSHTNLQLEQYLKQQQQQQQQHQHQQQQQPMDTLCAAAMTPSFSNNDQNSRGWWSGLPNPMQTIMPANMRPSPTATAATTATDCCAPTTTAAAIALQANDKLQALTPPMDVTPPKSPAKSQQSCAEPEKEHDLMSNSSEDMKYMA</sequence>
<reference key="1">
    <citation type="journal article" date="1997" name="Syst. Biol.">
        <title>Multiple sources of character information and the phylogeny of Hawaiian Drosophilids.</title>
        <authorList>
            <person name="Baker R.H."/>
            <person name="DeSalle R."/>
        </authorList>
    </citation>
    <scope>NUCLEOTIDE SEQUENCE [GENOMIC DNA]</scope>
</reference>
<accession>O46234</accession>
<accession>O46235</accession>
<dbReference type="EMBL" id="U92998">
    <property type="protein sequence ID" value="AAC03247.1"/>
    <property type="molecule type" value="Genomic_DNA"/>
</dbReference>
<dbReference type="EMBL" id="U92999">
    <property type="protein sequence ID" value="AAC03246.1"/>
    <property type="molecule type" value="Genomic_DNA"/>
</dbReference>
<dbReference type="SMR" id="O46234"/>
<dbReference type="GO" id="GO:0005634">
    <property type="term" value="C:nucleus"/>
    <property type="evidence" value="ECO:0007669"/>
    <property type="project" value="UniProtKB-SubCell"/>
</dbReference>
<dbReference type="GO" id="GO:0003677">
    <property type="term" value="F:DNA binding"/>
    <property type="evidence" value="ECO:0007669"/>
    <property type="project" value="UniProtKB-KW"/>
</dbReference>
<dbReference type="GO" id="GO:0008270">
    <property type="term" value="F:zinc ion binding"/>
    <property type="evidence" value="ECO:0007669"/>
    <property type="project" value="UniProtKB-KW"/>
</dbReference>
<dbReference type="GO" id="GO:0035282">
    <property type="term" value="P:segmentation"/>
    <property type="evidence" value="ECO:0007669"/>
    <property type="project" value="UniProtKB-KW"/>
</dbReference>
<keyword id="KW-0217">Developmental protein</keyword>
<keyword id="KW-0238">DNA-binding</keyword>
<keyword id="KW-0302">Gap protein</keyword>
<keyword id="KW-0479">Metal-binding</keyword>
<keyword id="KW-0539">Nucleus</keyword>
<keyword id="KW-0677">Repeat</keyword>
<keyword id="KW-0862">Zinc</keyword>
<keyword id="KW-0863">Zinc-finger</keyword>
<proteinExistence type="inferred from homology"/>
<gene>
    <name type="primary">hb</name>
</gene>
<name>HUNB_DROAA</name>
<evidence type="ECO:0000250" key="1"/>
<evidence type="ECO:0000256" key="2">
    <source>
        <dbReference type="SAM" id="MobiDB-lite"/>
    </source>
</evidence>
<evidence type="ECO:0000305" key="3"/>